<organism>
    <name type="scientific">Pseudomonas paraeruginosa (strain DSM 24068 / PA7)</name>
    <name type="common">Pseudomonas aeruginosa (strain PA7)</name>
    <dbReference type="NCBI Taxonomy" id="381754"/>
    <lineage>
        <taxon>Bacteria</taxon>
        <taxon>Pseudomonadati</taxon>
        <taxon>Pseudomonadota</taxon>
        <taxon>Gammaproteobacteria</taxon>
        <taxon>Pseudomonadales</taxon>
        <taxon>Pseudomonadaceae</taxon>
        <taxon>Pseudomonas</taxon>
        <taxon>Pseudomonas paraeruginosa</taxon>
    </lineage>
</organism>
<dbReference type="EC" id="2.4.2.22" evidence="1"/>
<dbReference type="EMBL" id="CP000744">
    <property type="protein sequence ID" value="ABR83536.1"/>
    <property type="molecule type" value="Genomic_DNA"/>
</dbReference>
<dbReference type="RefSeq" id="WP_012077919.1">
    <property type="nucleotide sequence ID" value="NC_009656.1"/>
</dbReference>
<dbReference type="SMR" id="A6VEA3"/>
<dbReference type="KEGG" id="pap:PSPA7_6072"/>
<dbReference type="HOGENOM" id="CLU_099015_0_0_6"/>
<dbReference type="UniPathway" id="UPA00602">
    <property type="reaction ID" value="UER00658"/>
</dbReference>
<dbReference type="Proteomes" id="UP000001582">
    <property type="component" value="Chromosome"/>
</dbReference>
<dbReference type="GO" id="GO:0005737">
    <property type="term" value="C:cytoplasm"/>
    <property type="evidence" value="ECO:0007669"/>
    <property type="project" value="UniProtKB-SubCell"/>
</dbReference>
<dbReference type="GO" id="GO:0000310">
    <property type="term" value="F:xanthine phosphoribosyltransferase activity"/>
    <property type="evidence" value="ECO:0007669"/>
    <property type="project" value="UniProtKB-UniRule"/>
</dbReference>
<dbReference type="GO" id="GO:0006166">
    <property type="term" value="P:purine ribonucleoside salvage"/>
    <property type="evidence" value="ECO:0007669"/>
    <property type="project" value="UniProtKB-KW"/>
</dbReference>
<dbReference type="GO" id="GO:0046110">
    <property type="term" value="P:xanthine metabolic process"/>
    <property type="evidence" value="ECO:0007669"/>
    <property type="project" value="InterPro"/>
</dbReference>
<dbReference type="GO" id="GO:0032265">
    <property type="term" value="P:XMP salvage"/>
    <property type="evidence" value="ECO:0007669"/>
    <property type="project" value="UniProtKB-UniRule"/>
</dbReference>
<dbReference type="CDD" id="cd06223">
    <property type="entry name" value="PRTases_typeI"/>
    <property type="match status" value="1"/>
</dbReference>
<dbReference type="FunFam" id="3.40.50.2020:FF:000027">
    <property type="entry name" value="Xanthine phosphoribosyltransferase"/>
    <property type="match status" value="1"/>
</dbReference>
<dbReference type="Gene3D" id="3.40.50.2020">
    <property type="match status" value="1"/>
</dbReference>
<dbReference type="HAMAP" id="MF_01184">
    <property type="entry name" value="XPRTase"/>
    <property type="match status" value="1"/>
</dbReference>
<dbReference type="InterPro" id="IPR000836">
    <property type="entry name" value="PRibTrfase_dom"/>
</dbReference>
<dbReference type="InterPro" id="IPR029057">
    <property type="entry name" value="PRTase-like"/>
</dbReference>
<dbReference type="InterPro" id="IPR050118">
    <property type="entry name" value="Pur/Pyrimidine_PRTase"/>
</dbReference>
<dbReference type="InterPro" id="IPR010079">
    <property type="entry name" value="Xanthine_PRibTrfase"/>
</dbReference>
<dbReference type="NCBIfam" id="NF006671">
    <property type="entry name" value="PRK09219.1"/>
    <property type="match status" value="1"/>
</dbReference>
<dbReference type="NCBIfam" id="TIGR01744">
    <property type="entry name" value="XPRTase"/>
    <property type="match status" value="1"/>
</dbReference>
<dbReference type="PANTHER" id="PTHR43864">
    <property type="entry name" value="HYPOXANTHINE/GUANINE PHOSPHORIBOSYLTRANSFERASE"/>
    <property type="match status" value="1"/>
</dbReference>
<dbReference type="PANTHER" id="PTHR43864:SF1">
    <property type="entry name" value="XANTHINE PHOSPHORIBOSYLTRANSFERASE"/>
    <property type="match status" value="1"/>
</dbReference>
<dbReference type="Pfam" id="PF00156">
    <property type="entry name" value="Pribosyltran"/>
    <property type="match status" value="1"/>
</dbReference>
<dbReference type="SUPFAM" id="SSF53271">
    <property type="entry name" value="PRTase-like"/>
    <property type="match status" value="1"/>
</dbReference>
<protein>
    <recommendedName>
        <fullName evidence="1">Xanthine phosphoribosyltransferase</fullName>
        <shortName evidence="1">XPRTase</shortName>
        <ecNumber evidence="1">2.4.2.22</ecNumber>
    </recommendedName>
</protein>
<name>XPT_PSEP7</name>
<feature type="chain" id="PRO_0000339728" description="Xanthine phosphoribosyltransferase">
    <location>
        <begin position="1"/>
        <end position="190"/>
    </location>
</feature>
<feature type="binding site" evidence="1">
    <location>
        <position position="20"/>
    </location>
    <ligand>
        <name>xanthine</name>
        <dbReference type="ChEBI" id="CHEBI:17712"/>
    </ligand>
</feature>
<feature type="binding site" evidence="1">
    <location>
        <position position="27"/>
    </location>
    <ligand>
        <name>xanthine</name>
        <dbReference type="ChEBI" id="CHEBI:17712"/>
    </ligand>
</feature>
<feature type="binding site" evidence="1">
    <location>
        <begin position="128"/>
        <end position="132"/>
    </location>
    <ligand>
        <name>5-phospho-alpha-D-ribose 1-diphosphate</name>
        <dbReference type="ChEBI" id="CHEBI:58017"/>
    </ligand>
</feature>
<feature type="binding site" evidence="1">
    <location>
        <position position="156"/>
    </location>
    <ligand>
        <name>xanthine</name>
        <dbReference type="ChEBI" id="CHEBI:17712"/>
    </ligand>
</feature>
<proteinExistence type="inferred from homology"/>
<keyword id="KW-0963">Cytoplasm</keyword>
<keyword id="KW-0328">Glycosyltransferase</keyword>
<keyword id="KW-0660">Purine salvage</keyword>
<keyword id="KW-0808">Transferase</keyword>
<comment type="function">
    <text evidence="1">Converts the preformed base xanthine, a product of nucleic acid breakdown, to xanthosine 5'-monophosphate (XMP), so it can be reused for RNA or DNA synthesis.</text>
</comment>
<comment type="catalytic activity">
    <reaction evidence="1">
        <text>XMP + diphosphate = xanthine + 5-phospho-alpha-D-ribose 1-diphosphate</text>
        <dbReference type="Rhea" id="RHEA:10800"/>
        <dbReference type="ChEBI" id="CHEBI:17712"/>
        <dbReference type="ChEBI" id="CHEBI:33019"/>
        <dbReference type="ChEBI" id="CHEBI:57464"/>
        <dbReference type="ChEBI" id="CHEBI:58017"/>
        <dbReference type="EC" id="2.4.2.22"/>
    </reaction>
</comment>
<comment type="pathway">
    <text evidence="1">Purine metabolism; XMP biosynthesis via salvage pathway; XMP from xanthine: step 1/1.</text>
</comment>
<comment type="subunit">
    <text evidence="1">Homodimer.</text>
</comment>
<comment type="subcellular location">
    <subcellularLocation>
        <location evidence="1">Cytoplasm</location>
    </subcellularLocation>
</comment>
<comment type="similarity">
    <text evidence="1">Belongs to the purine/pyrimidine phosphoribosyltransferase family. Xpt subfamily.</text>
</comment>
<gene>
    <name evidence="1" type="primary">xpt</name>
    <name type="ordered locus">PSPA7_6072</name>
</gene>
<reference key="1">
    <citation type="submission" date="2007-06" db="EMBL/GenBank/DDBJ databases">
        <authorList>
            <person name="Dodson R.J."/>
            <person name="Harkins D."/>
            <person name="Paulsen I.T."/>
        </authorList>
    </citation>
    <scope>NUCLEOTIDE SEQUENCE [LARGE SCALE GENOMIC DNA]</scope>
    <source>
        <strain>DSM 24068 / PA7</strain>
    </source>
</reference>
<evidence type="ECO:0000255" key="1">
    <source>
        <dbReference type="HAMAP-Rule" id="MF_01184"/>
    </source>
</evidence>
<accession>A6VEA3</accession>
<sequence length="190" mass="20595">MDTLKDKIRSEGIVLSEHVLKVDAFLNHQIDPQLMQQVGHAFATRFRDQGITKIVTIEASGIAPAVMAGLELGVPVIFARKYQSLTLKDNLYISKVFSFTKQTESTIAISAKHLNAHDHVLVIDDFLANGHAAKALIDLIGQAGASIAGLGIVIEKSFQDGRALLESEGYRVESLARVKSLAGGQVEFLD</sequence>